<gene>
    <name type="primary">Emc6</name>
    <name type="synonym">Tmem93</name>
</gene>
<dbReference type="EMBL" id="AK002385">
    <property type="protein sequence ID" value="BAB22059.1"/>
    <property type="molecule type" value="mRNA"/>
</dbReference>
<dbReference type="EMBL" id="AK003198">
    <property type="protein sequence ID" value="BAB22636.1"/>
    <property type="molecule type" value="mRNA"/>
</dbReference>
<dbReference type="EMBL" id="AK004149">
    <property type="protein sequence ID" value="BAB23194.1"/>
    <property type="molecule type" value="mRNA"/>
</dbReference>
<dbReference type="EMBL" id="AK012769">
    <property type="protein sequence ID" value="BAB28457.1"/>
    <property type="molecule type" value="mRNA"/>
</dbReference>
<dbReference type="EMBL" id="AL670399">
    <property type="status" value="NOT_ANNOTATED_CDS"/>
    <property type="molecule type" value="Genomic_DNA"/>
</dbReference>
<dbReference type="EMBL" id="BC022104">
    <property type="protein sequence ID" value="AAH22104.1"/>
    <property type="molecule type" value="mRNA"/>
</dbReference>
<dbReference type="CCDS" id="CCDS24999.1"/>
<dbReference type="RefSeq" id="NP_001161942.1">
    <property type="nucleotide sequence ID" value="NM_001168470.1"/>
</dbReference>
<dbReference type="RefSeq" id="NP_079594.1">
    <property type="nucleotide sequence ID" value="NM_025318.3"/>
</dbReference>
<dbReference type="SMR" id="Q9CQW0"/>
<dbReference type="BioGRID" id="211176">
    <property type="interactions" value="18"/>
</dbReference>
<dbReference type="ComplexPortal" id="CPX-5882">
    <property type="entry name" value="Endoplasmic reticulum membrane complex, EMC8 variant"/>
</dbReference>
<dbReference type="ComplexPortal" id="CPX-5883">
    <property type="entry name" value="Endoplasmic reticulum membrane complex, EMC9 variant"/>
</dbReference>
<dbReference type="FunCoup" id="Q9CQW0">
    <property type="interactions" value="1927"/>
</dbReference>
<dbReference type="IntAct" id="Q9CQW0">
    <property type="interactions" value="15"/>
</dbReference>
<dbReference type="STRING" id="10090.ENSMUSP00000060892"/>
<dbReference type="PhosphoSitePlus" id="Q9CQW0"/>
<dbReference type="jPOST" id="Q9CQW0"/>
<dbReference type="PaxDb" id="10090-ENSMUSP00000104120"/>
<dbReference type="PeptideAtlas" id="Q9CQW0"/>
<dbReference type="ProteomicsDB" id="277857"/>
<dbReference type="Pumba" id="Q9CQW0"/>
<dbReference type="Antibodypedia" id="23098">
    <property type="antibodies" value="53 antibodies from 15 providers"/>
</dbReference>
<dbReference type="DNASU" id="66048"/>
<dbReference type="Ensembl" id="ENSMUST00000054952.4">
    <property type="protein sequence ID" value="ENSMUSP00000060892.4"/>
    <property type="gene ID" value="ENSMUSG00000047260.5"/>
</dbReference>
<dbReference type="Ensembl" id="ENSMUST00000108480.2">
    <property type="protein sequence ID" value="ENSMUSP00000104120.2"/>
    <property type="gene ID" value="ENSMUSG00000047260.5"/>
</dbReference>
<dbReference type="GeneID" id="66048"/>
<dbReference type="KEGG" id="mmu:66048"/>
<dbReference type="UCSC" id="uc007kab.2">
    <property type="organism name" value="mouse"/>
</dbReference>
<dbReference type="AGR" id="MGI:1913298"/>
<dbReference type="CTD" id="83460"/>
<dbReference type="MGI" id="MGI:1913298">
    <property type="gene designation" value="Emc6"/>
</dbReference>
<dbReference type="VEuPathDB" id="HostDB:ENSMUSG00000047260"/>
<dbReference type="eggNOG" id="KOG4455">
    <property type="taxonomic scope" value="Eukaryota"/>
</dbReference>
<dbReference type="GeneTree" id="ENSGT00390000003917"/>
<dbReference type="HOGENOM" id="CLU_110781_3_0_1"/>
<dbReference type="InParanoid" id="Q9CQW0"/>
<dbReference type="OMA" id="MKANFEW"/>
<dbReference type="OrthoDB" id="16510at2759"/>
<dbReference type="PhylomeDB" id="Q9CQW0"/>
<dbReference type="TreeFam" id="TF332611"/>
<dbReference type="BioGRID-ORCS" id="66048">
    <property type="hits" value="23 hits in 77 CRISPR screens"/>
</dbReference>
<dbReference type="ChiTaRS" id="Emc6">
    <property type="organism name" value="mouse"/>
</dbReference>
<dbReference type="PRO" id="PR:Q9CQW0"/>
<dbReference type="Proteomes" id="UP000000589">
    <property type="component" value="Chromosome 11"/>
</dbReference>
<dbReference type="RNAct" id="Q9CQW0">
    <property type="molecule type" value="protein"/>
</dbReference>
<dbReference type="Bgee" id="ENSMUSG00000047260">
    <property type="expression patterns" value="Expressed in right kidney and 259 other cell types or tissues"/>
</dbReference>
<dbReference type="GO" id="GO:0072546">
    <property type="term" value="C:EMC complex"/>
    <property type="evidence" value="ECO:0000250"/>
    <property type="project" value="UniProtKB"/>
</dbReference>
<dbReference type="GO" id="GO:0005789">
    <property type="term" value="C:endoplasmic reticulum membrane"/>
    <property type="evidence" value="ECO:0000250"/>
    <property type="project" value="UniProtKB"/>
</dbReference>
<dbReference type="GO" id="GO:0016020">
    <property type="term" value="C:membrane"/>
    <property type="evidence" value="ECO:0000250"/>
    <property type="project" value="UniProtKB"/>
</dbReference>
<dbReference type="GO" id="GO:1903349">
    <property type="term" value="C:omegasome membrane"/>
    <property type="evidence" value="ECO:0007669"/>
    <property type="project" value="Ensembl"/>
</dbReference>
<dbReference type="GO" id="GO:0032977">
    <property type="term" value="F:membrane insertase activity"/>
    <property type="evidence" value="ECO:0007669"/>
    <property type="project" value="Ensembl"/>
</dbReference>
<dbReference type="GO" id="GO:0000045">
    <property type="term" value="P:autophagosome assembly"/>
    <property type="evidence" value="ECO:0007669"/>
    <property type="project" value="Ensembl"/>
</dbReference>
<dbReference type="GO" id="GO:0045050">
    <property type="term" value="P:protein insertion into ER membrane by stop-transfer membrane-anchor sequence"/>
    <property type="evidence" value="ECO:0000250"/>
    <property type="project" value="UniProtKB"/>
</dbReference>
<dbReference type="GO" id="GO:0071816">
    <property type="term" value="P:tail-anchored membrane protein insertion into ER membrane"/>
    <property type="evidence" value="ECO:0000250"/>
    <property type="project" value="UniProtKB"/>
</dbReference>
<dbReference type="InterPro" id="IPR008504">
    <property type="entry name" value="Emc6"/>
</dbReference>
<dbReference type="InterPro" id="IPR029008">
    <property type="entry name" value="EMC6-like"/>
</dbReference>
<dbReference type="PANTHER" id="PTHR20994">
    <property type="entry name" value="ER MEMBRANE PROTEIN COMPLEX SUBUNIT 6"/>
    <property type="match status" value="1"/>
</dbReference>
<dbReference type="PANTHER" id="PTHR20994:SF0">
    <property type="entry name" value="ER MEMBRANE PROTEIN COMPLEX SUBUNIT 6"/>
    <property type="match status" value="1"/>
</dbReference>
<dbReference type="Pfam" id="PF07019">
    <property type="entry name" value="EMC6"/>
    <property type="match status" value="1"/>
</dbReference>
<proteinExistence type="evidence at protein level"/>
<protein>
    <recommendedName>
        <fullName>ER membrane protein complex subunit 6</fullName>
    </recommendedName>
    <alternativeName>
        <fullName>Transmembrane protein 93</fullName>
    </alternativeName>
</protein>
<name>EMC6_MOUSE</name>
<comment type="function">
    <text evidence="1">Part of the endoplasmic reticulum membrane protein complex (EMC) that enables the energy-independent insertion into endoplasmic reticulum membranes of newly synthesized membrane proteins. Preferentially accommodates proteins with transmembrane domains that are weakly hydrophobic or contain destabilizing features such as charged and aromatic residues. Involved in the cotranslational insertion of multi-pass membrane proteins in which stop-transfer membrane-anchor sequences become ER membrane spanning helices. It is also required for the post-translational insertion of tail-anchored/TA proteins in endoplasmic reticulum membranes. By mediating the proper cotranslational insertion of N-terminal transmembrane domains in an N-exo topology, with translocated N-terminus in the lumen of the ER, controls the topology of multi-pass membrane proteins like the G protein-coupled receptors. By regulating the insertion of various proteins in membranes, it is indirectly involved in many cellular processes.</text>
</comment>
<comment type="subunit">
    <text evidence="1">Component of the ER membrane protein complex (EMC).</text>
</comment>
<comment type="subcellular location">
    <subcellularLocation>
        <location evidence="1">Endoplasmic reticulum membrane</location>
        <topology evidence="1">Multi-pass membrane protein</topology>
    </subcellularLocation>
</comment>
<comment type="similarity">
    <text evidence="2">Belongs to the EMC6 family.</text>
</comment>
<keyword id="KW-0007">Acetylation</keyword>
<keyword id="KW-0256">Endoplasmic reticulum</keyword>
<keyword id="KW-0472">Membrane</keyword>
<keyword id="KW-1185">Reference proteome</keyword>
<keyword id="KW-0812">Transmembrane</keyword>
<keyword id="KW-1133">Transmembrane helix</keyword>
<reference key="1">
    <citation type="journal article" date="2005" name="Science">
        <title>The transcriptional landscape of the mammalian genome.</title>
        <authorList>
            <person name="Carninci P."/>
            <person name="Kasukawa T."/>
            <person name="Katayama S."/>
            <person name="Gough J."/>
            <person name="Frith M.C."/>
            <person name="Maeda N."/>
            <person name="Oyama R."/>
            <person name="Ravasi T."/>
            <person name="Lenhard B."/>
            <person name="Wells C."/>
            <person name="Kodzius R."/>
            <person name="Shimokawa K."/>
            <person name="Bajic V.B."/>
            <person name="Brenner S.E."/>
            <person name="Batalov S."/>
            <person name="Forrest A.R."/>
            <person name="Zavolan M."/>
            <person name="Davis M.J."/>
            <person name="Wilming L.G."/>
            <person name="Aidinis V."/>
            <person name="Allen J.E."/>
            <person name="Ambesi-Impiombato A."/>
            <person name="Apweiler R."/>
            <person name="Aturaliya R.N."/>
            <person name="Bailey T.L."/>
            <person name="Bansal M."/>
            <person name="Baxter L."/>
            <person name="Beisel K.W."/>
            <person name="Bersano T."/>
            <person name="Bono H."/>
            <person name="Chalk A.M."/>
            <person name="Chiu K.P."/>
            <person name="Choudhary V."/>
            <person name="Christoffels A."/>
            <person name="Clutterbuck D.R."/>
            <person name="Crowe M.L."/>
            <person name="Dalla E."/>
            <person name="Dalrymple B.P."/>
            <person name="de Bono B."/>
            <person name="Della Gatta G."/>
            <person name="di Bernardo D."/>
            <person name="Down T."/>
            <person name="Engstrom P."/>
            <person name="Fagiolini M."/>
            <person name="Faulkner G."/>
            <person name="Fletcher C.F."/>
            <person name="Fukushima T."/>
            <person name="Furuno M."/>
            <person name="Futaki S."/>
            <person name="Gariboldi M."/>
            <person name="Georgii-Hemming P."/>
            <person name="Gingeras T.R."/>
            <person name="Gojobori T."/>
            <person name="Green R.E."/>
            <person name="Gustincich S."/>
            <person name="Harbers M."/>
            <person name="Hayashi Y."/>
            <person name="Hensch T.K."/>
            <person name="Hirokawa N."/>
            <person name="Hill D."/>
            <person name="Huminiecki L."/>
            <person name="Iacono M."/>
            <person name="Ikeo K."/>
            <person name="Iwama A."/>
            <person name="Ishikawa T."/>
            <person name="Jakt M."/>
            <person name="Kanapin A."/>
            <person name="Katoh M."/>
            <person name="Kawasawa Y."/>
            <person name="Kelso J."/>
            <person name="Kitamura H."/>
            <person name="Kitano H."/>
            <person name="Kollias G."/>
            <person name="Krishnan S.P."/>
            <person name="Kruger A."/>
            <person name="Kummerfeld S.K."/>
            <person name="Kurochkin I.V."/>
            <person name="Lareau L.F."/>
            <person name="Lazarevic D."/>
            <person name="Lipovich L."/>
            <person name="Liu J."/>
            <person name="Liuni S."/>
            <person name="McWilliam S."/>
            <person name="Madan Babu M."/>
            <person name="Madera M."/>
            <person name="Marchionni L."/>
            <person name="Matsuda H."/>
            <person name="Matsuzawa S."/>
            <person name="Miki H."/>
            <person name="Mignone F."/>
            <person name="Miyake S."/>
            <person name="Morris K."/>
            <person name="Mottagui-Tabar S."/>
            <person name="Mulder N."/>
            <person name="Nakano N."/>
            <person name="Nakauchi H."/>
            <person name="Ng P."/>
            <person name="Nilsson R."/>
            <person name="Nishiguchi S."/>
            <person name="Nishikawa S."/>
            <person name="Nori F."/>
            <person name="Ohara O."/>
            <person name="Okazaki Y."/>
            <person name="Orlando V."/>
            <person name="Pang K.C."/>
            <person name="Pavan W.J."/>
            <person name="Pavesi G."/>
            <person name="Pesole G."/>
            <person name="Petrovsky N."/>
            <person name="Piazza S."/>
            <person name="Reed J."/>
            <person name="Reid J.F."/>
            <person name="Ring B.Z."/>
            <person name="Ringwald M."/>
            <person name="Rost B."/>
            <person name="Ruan Y."/>
            <person name="Salzberg S.L."/>
            <person name="Sandelin A."/>
            <person name="Schneider C."/>
            <person name="Schoenbach C."/>
            <person name="Sekiguchi K."/>
            <person name="Semple C.A."/>
            <person name="Seno S."/>
            <person name="Sessa L."/>
            <person name="Sheng Y."/>
            <person name="Shibata Y."/>
            <person name="Shimada H."/>
            <person name="Shimada K."/>
            <person name="Silva D."/>
            <person name="Sinclair B."/>
            <person name="Sperling S."/>
            <person name="Stupka E."/>
            <person name="Sugiura K."/>
            <person name="Sultana R."/>
            <person name="Takenaka Y."/>
            <person name="Taki K."/>
            <person name="Tammoja K."/>
            <person name="Tan S.L."/>
            <person name="Tang S."/>
            <person name="Taylor M.S."/>
            <person name="Tegner J."/>
            <person name="Teichmann S.A."/>
            <person name="Ueda H.R."/>
            <person name="van Nimwegen E."/>
            <person name="Verardo R."/>
            <person name="Wei C.L."/>
            <person name="Yagi K."/>
            <person name="Yamanishi H."/>
            <person name="Zabarovsky E."/>
            <person name="Zhu S."/>
            <person name="Zimmer A."/>
            <person name="Hide W."/>
            <person name="Bult C."/>
            <person name="Grimmond S.M."/>
            <person name="Teasdale R.D."/>
            <person name="Liu E.T."/>
            <person name="Brusic V."/>
            <person name="Quackenbush J."/>
            <person name="Wahlestedt C."/>
            <person name="Mattick J.S."/>
            <person name="Hume D.A."/>
            <person name="Kai C."/>
            <person name="Sasaki D."/>
            <person name="Tomaru Y."/>
            <person name="Fukuda S."/>
            <person name="Kanamori-Katayama M."/>
            <person name="Suzuki M."/>
            <person name="Aoki J."/>
            <person name="Arakawa T."/>
            <person name="Iida J."/>
            <person name="Imamura K."/>
            <person name="Itoh M."/>
            <person name="Kato T."/>
            <person name="Kawaji H."/>
            <person name="Kawagashira N."/>
            <person name="Kawashima T."/>
            <person name="Kojima M."/>
            <person name="Kondo S."/>
            <person name="Konno H."/>
            <person name="Nakano K."/>
            <person name="Ninomiya N."/>
            <person name="Nishio T."/>
            <person name="Okada M."/>
            <person name="Plessy C."/>
            <person name="Shibata K."/>
            <person name="Shiraki T."/>
            <person name="Suzuki S."/>
            <person name="Tagami M."/>
            <person name="Waki K."/>
            <person name="Watahiki A."/>
            <person name="Okamura-Oho Y."/>
            <person name="Suzuki H."/>
            <person name="Kawai J."/>
            <person name="Hayashizaki Y."/>
        </authorList>
    </citation>
    <scope>NUCLEOTIDE SEQUENCE [LARGE SCALE MRNA]</scope>
    <source>
        <strain>C57BL/6J</strain>
        <tissue>Embryo</tissue>
        <tissue>Kidney</tissue>
    </source>
</reference>
<reference key="2">
    <citation type="journal article" date="2009" name="PLoS Biol.">
        <title>Lineage-specific biology revealed by a finished genome assembly of the mouse.</title>
        <authorList>
            <person name="Church D.M."/>
            <person name="Goodstadt L."/>
            <person name="Hillier L.W."/>
            <person name="Zody M.C."/>
            <person name="Goldstein S."/>
            <person name="She X."/>
            <person name="Bult C.J."/>
            <person name="Agarwala R."/>
            <person name="Cherry J.L."/>
            <person name="DiCuccio M."/>
            <person name="Hlavina W."/>
            <person name="Kapustin Y."/>
            <person name="Meric P."/>
            <person name="Maglott D."/>
            <person name="Birtle Z."/>
            <person name="Marques A.C."/>
            <person name="Graves T."/>
            <person name="Zhou S."/>
            <person name="Teague B."/>
            <person name="Potamousis K."/>
            <person name="Churas C."/>
            <person name="Place M."/>
            <person name="Herschleb J."/>
            <person name="Runnheim R."/>
            <person name="Forrest D."/>
            <person name="Amos-Landgraf J."/>
            <person name="Schwartz D.C."/>
            <person name="Cheng Z."/>
            <person name="Lindblad-Toh K."/>
            <person name="Eichler E.E."/>
            <person name="Ponting C.P."/>
        </authorList>
    </citation>
    <scope>NUCLEOTIDE SEQUENCE [LARGE SCALE GENOMIC DNA]</scope>
    <source>
        <strain>C57BL/6J</strain>
    </source>
</reference>
<reference key="3">
    <citation type="journal article" date="2004" name="Genome Res.">
        <title>The status, quality, and expansion of the NIH full-length cDNA project: the Mammalian Gene Collection (MGC).</title>
        <authorList>
            <consortium name="The MGC Project Team"/>
        </authorList>
    </citation>
    <scope>NUCLEOTIDE SEQUENCE [LARGE SCALE MRNA]</scope>
    <source>
        <strain>FVB/N</strain>
        <tissue>Liver</tissue>
    </source>
</reference>
<reference key="4">
    <citation type="journal article" date="2010" name="Cell">
        <title>A tissue-specific atlas of mouse protein phosphorylation and expression.</title>
        <authorList>
            <person name="Huttlin E.L."/>
            <person name="Jedrychowski M.P."/>
            <person name="Elias J.E."/>
            <person name="Goswami T."/>
            <person name="Rad R."/>
            <person name="Beausoleil S.A."/>
            <person name="Villen J."/>
            <person name="Haas W."/>
            <person name="Sowa M.E."/>
            <person name="Gygi S.P."/>
        </authorList>
    </citation>
    <scope>IDENTIFICATION BY MASS SPECTROMETRY [LARGE SCALE ANALYSIS]</scope>
    <source>
        <tissue>Testis</tissue>
    </source>
</reference>
<organism>
    <name type="scientific">Mus musculus</name>
    <name type="common">Mouse</name>
    <dbReference type="NCBI Taxonomy" id="10090"/>
    <lineage>
        <taxon>Eukaryota</taxon>
        <taxon>Metazoa</taxon>
        <taxon>Chordata</taxon>
        <taxon>Craniata</taxon>
        <taxon>Vertebrata</taxon>
        <taxon>Euteleostomi</taxon>
        <taxon>Mammalia</taxon>
        <taxon>Eutheria</taxon>
        <taxon>Euarchontoglires</taxon>
        <taxon>Glires</taxon>
        <taxon>Rodentia</taxon>
        <taxon>Myomorpha</taxon>
        <taxon>Muroidea</taxon>
        <taxon>Muridae</taxon>
        <taxon>Murinae</taxon>
        <taxon>Mus</taxon>
        <taxon>Mus</taxon>
    </lineage>
</organism>
<evidence type="ECO:0000250" key="1">
    <source>
        <dbReference type="UniProtKB" id="Q9BV81"/>
    </source>
</evidence>
<evidence type="ECO:0000305" key="2"/>
<accession>Q9CQW0</accession>
<accession>Q9CQ41</accession>
<feature type="initiator methionine" description="Removed" evidence="1">
    <location>
        <position position="1"/>
    </location>
</feature>
<feature type="chain" id="PRO_0000254157" description="ER membrane protein complex subunit 6">
    <location>
        <begin position="2"/>
        <end position="110"/>
    </location>
</feature>
<feature type="topological domain" description="Cytoplasmic" evidence="1">
    <location>
        <begin position="2"/>
        <end position="28"/>
    </location>
</feature>
<feature type="transmembrane region" description="Helical" evidence="1">
    <location>
        <begin position="29"/>
        <end position="44"/>
    </location>
</feature>
<feature type="topological domain" description="Lumenal" evidence="1">
    <location>
        <begin position="45"/>
        <end position="50"/>
    </location>
</feature>
<feature type="transmembrane region" description="Helical" evidence="1">
    <location>
        <begin position="51"/>
        <end position="71"/>
    </location>
</feature>
<feature type="topological domain" description="Cytoplasmic" evidence="1">
    <location>
        <begin position="72"/>
        <end position="89"/>
    </location>
</feature>
<feature type="transmembrane region" description="Helical" evidence="1">
    <location>
        <begin position="90"/>
        <end position="106"/>
    </location>
</feature>
<feature type="topological domain" description="Lumenal" evidence="1">
    <location>
        <begin position="107"/>
        <end position="110"/>
    </location>
</feature>
<feature type="modified residue" description="N-acetylalanine" evidence="1">
    <location>
        <position position="2"/>
    </location>
</feature>
<feature type="sequence conflict" description="In Ref. 1; BAB28457/BAB22059." evidence="2" ref="1">
    <original>S</original>
    <variation>P</variation>
    <location>
        <position position="63"/>
    </location>
</feature>
<sequence>MAAVVAKREGPPFISEAAVRGNAAVLDYCRTSVSALSGATAGILGLTGLYGFIFYLLASVLLSLLLILKAGRRWNKYFKSRRPLFTGGLIGGLFTYVLFWTFLYGMVHVY</sequence>